<dbReference type="EC" id="1.2.1.70" evidence="1"/>
<dbReference type="EMBL" id="AF080002">
    <property type="protein sequence ID" value="AAC84013.1"/>
    <property type="molecule type" value="Genomic_DNA"/>
</dbReference>
<dbReference type="PIR" id="T31441">
    <property type="entry name" value="T31441"/>
</dbReference>
<dbReference type="RefSeq" id="WP_155475579.1">
    <property type="nucleotide sequence ID" value="NZ_WNKU01000004.1"/>
</dbReference>
<dbReference type="SMR" id="Q9ZGG6"/>
<dbReference type="OrthoDB" id="110209at2"/>
<dbReference type="UniPathway" id="UPA00251">
    <property type="reaction ID" value="UER00316"/>
</dbReference>
<dbReference type="GO" id="GO:0008883">
    <property type="term" value="F:glutamyl-tRNA reductase activity"/>
    <property type="evidence" value="ECO:0007669"/>
    <property type="project" value="UniProtKB-UniRule"/>
</dbReference>
<dbReference type="GO" id="GO:0050661">
    <property type="term" value="F:NADP binding"/>
    <property type="evidence" value="ECO:0007669"/>
    <property type="project" value="InterPro"/>
</dbReference>
<dbReference type="GO" id="GO:0019353">
    <property type="term" value="P:protoporphyrinogen IX biosynthetic process from glutamate"/>
    <property type="evidence" value="ECO:0007669"/>
    <property type="project" value="TreeGrafter"/>
</dbReference>
<dbReference type="CDD" id="cd05213">
    <property type="entry name" value="NAD_bind_Glutamyl_tRNA_reduct"/>
    <property type="match status" value="1"/>
</dbReference>
<dbReference type="FunFam" id="3.30.460.30:FF:000001">
    <property type="entry name" value="Glutamyl-tRNA reductase"/>
    <property type="match status" value="1"/>
</dbReference>
<dbReference type="FunFam" id="3.40.50.720:FF:000031">
    <property type="entry name" value="Glutamyl-tRNA reductase"/>
    <property type="match status" value="1"/>
</dbReference>
<dbReference type="Gene3D" id="3.30.460.30">
    <property type="entry name" value="Glutamyl-tRNA reductase, N-terminal domain"/>
    <property type="match status" value="1"/>
</dbReference>
<dbReference type="Gene3D" id="3.40.50.720">
    <property type="entry name" value="NAD(P)-binding Rossmann-like Domain"/>
    <property type="match status" value="1"/>
</dbReference>
<dbReference type="HAMAP" id="MF_00087">
    <property type="entry name" value="Glu_tRNA_reductase"/>
    <property type="match status" value="1"/>
</dbReference>
<dbReference type="InterPro" id="IPR000343">
    <property type="entry name" value="4pyrrol_synth_GluRdtase"/>
</dbReference>
<dbReference type="InterPro" id="IPR015896">
    <property type="entry name" value="4pyrrol_synth_GluRdtase_dimer"/>
</dbReference>
<dbReference type="InterPro" id="IPR015895">
    <property type="entry name" value="4pyrrol_synth_GluRdtase_N"/>
</dbReference>
<dbReference type="InterPro" id="IPR018214">
    <property type="entry name" value="GluRdtase_CS"/>
</dbReference>
<dbReference type="InterPro" id="IPR036453">
    <property type="entry name" value="GluRdtase_dimer_dom_sf"/>
</dbReference>
<dbReference type="InterPro" id="IPR036343">
    <property type="entry name" value="GluRdtase_N_sf"/>
</dbReference>
<dbReference type="InterPro" id="IPR036291">
    <property type="entry name" value="NAD(P)-bd_dom_sf"/>
</dbReference>
<dbReference type="InterPro" id="IPR006151">
    <property type="entry name" value="Shikm_DH/Glu-tRNA_Rdtase"/>
</dbReference>
<dbReference type="NCBIfam" id="TIGR01035">
    <property type="entry name" value="hemA"/>
    <property type="match status" value="1"/>
</dbReference>
<dbReference type="NCBIfam" id="NF000744">
    <property type="entry name" value="PRK00045.1-3"/>
    <property type="match status" value="1"/>
</dbReference>
<dbReference type="PANTHER" id="PTHR43013">
    <property type="entry name" value="GLUTAMYL-TRNA REDUCTASE"/>
    <property type="match status" value="1"/>
</dbReference>
<dbReference type="PANTHER" id="PTHR43013:SF1">
    <property type="entry name" value="GLUTAMYL-TRNA REDUCTASE"/>
    <property type="match status" value="1"/>
</dbReference>
<dbReference type="Pfam" id="PF00745">
    <property type="entry name" value="GlutR_dimer"/>
    <property type="match status" value="1"/>
</dbReference>
<dbReference type="Pfam" id="PF05201">
    <property type="entry name" value="GlutR_N"/>
    <property type="match status" value="1"/>
</dbReference>
<dbReference type="Pfam" id="PF01488">
    <property type="entry name" value="Shikimate_DH"/>
    <property type="match status" value="1"/>
</dbReference>
<dbReference type="PIRSF" id="PIRSF000445">
    <property type="entry name" value="4pyrrol_synth_GluRdtase"/>
    <property type="match status" value="1"/>
</dbReference>
<dbReference type="SUPFAM" id="SSF69742">
    <property type="entry name" value="Glutamyl tRNA-reductase catalytic, N-terminal domain"/>
    <property type="match status" value="1"/>
</dbReference>
<dbReference type="SUPFAM" id="SSF69075">
    <property type="entry name" value="Glutamyl tRNA-reductase dimerization domain"/>
    <property type="match status" value="1"/>
</dbReference>
<dbReference type="SUPFAM" id="SSF51735">
    <property type="entry name" value="NAD(P)-binding Rossmann-fold domains"/>
    <property type="match status" value="1"/>
</dbReference>
<dbReference type="PROSITE" id="PS00747">
    <property type="entry name" value="GLUTR"/>
    <property type="match status" value="1"/>
</dbReference>
<keyword id="KW-0521">NADP</keyword>
<keyword id="KW-0560">Oxidoreductase</keyword>
<keyword id="KW-0627">Porphyrin biosynthesis</keyword>
<name>HEM1_HELMO</name>
<feature type="chain" id="PRO_0000114030" description="Glutamyl-tRNA reductase">
    <location>
        <begin position="1"/>
        <end position="443"/>
    </location>
</feature>
<feature type="active site" description="Nucleophile" evidence="1">
    <location>
        <position position="50"/>
    </location>
</feature>
<feature type="binding site" evidence="1">
    <location>
        <begin position="49"/>
        <end position="52"/>
    </location>
    <ligand>
        <name>substrate</name>
    </ligand>
</feature>
<feature type="binding site" evidence="1">
    <location>
        <position position="109"/>
    </location>
    <ligand>
        <name>substrate</name>
    </ligand>
</feature>
<feature type="binding site" evidence="1">
    <location>
        <begin position="114"/>
        <end position="116"/>
    </location>
    <ligand>
        <name>substrate</name>
    </ligand>
</feature>
<feature type="binding site" evidence="1">
    <location>
        <position position="120"/>
    </location>
    <ligand>
        <name>substrate</name>
    </ligand>
</feature>
<feature type="binding site" evidence="1">
    <location>
        <begin position="189"/>
        <end position="194"/>
    </location>
    <ligand>
        <name>NADP(+)</name>
        <dbReference type="ChEBI" id="CHEBI:58349"/>
    </ligand>
</feature>
<feature type="site" description="Important for activity" evidence="1">
    <location>
        <position position="99"/>
    </location>
</feature>
<organism>
    <name type="scientific">Heliobacterium mobile</name>
    <name type="common">Heliobacillus mobilis</name>
    <dbReference type="NCBI Taxonomy" id="28064"/>
    <lineage>
        <taxon>Bacteria</taxon>
        <taxon>Bacillati</taxon>
        <taxon>Bacillota</taxon>
        <taxon>Clostridia</taxon>
        <taxon>Eubacteriales</taxon>
        <taxon>Heliobacteriaceae</taxon>
        <taxon>Heliobacterium</taxon>
    </lineage>
</organism>
<reference key="1">
    <citation type="journal article" date="1998" name="Proc. Natl. Acad. Sci. U.S.A.">
        <title>Tracking molecular evolution of photosynthesis by characterization of a major photosynthesis gene cluster from Heliobacillus mobilis.</title>
        <authorList>
            <person name="Xiong J."/>
            <person name="Inoue K."/>
            <person name="Bauer C.E."/>
        </authorList>
    </citation>
    <scope>NUCLEOTIDE SEQUENCE [GENOMIC DNA]</scope>
</reference>
<protein>
    <recommendedName>
        <fullName evidence="1">Glutamyl-tRNA reductase</fullName>
        <shortName evidence="1">GluTR</shortName>
        <ecNumber evidence="1">1.2.1.70</ecNumber>
    </recommendedName>
</protein>
<evidence type="ECO:0000255" key="1">
    <source>
        <dbReference type="HAMAP-Rule" id="MF_00087"/>
    </source>
</evidence>
<gene>
    <name evidence="1" type="primary">hemA</name>
</gene>
<sequence length="443" mass="49577">MFIFVVGLNHKSAPVEVREKLSFTEAQLSEALHKLQGMAGIEGCCILSTCNRTEIYGASTDMEKGMTAVKRFVLEWGQLQPQDFSKYFYVHTLYDAIRHLFRVASGLDSMVLGETQILGQVRTAYQRSCNEDCSNGIVNTWFQQAITVGKRVRTETGIDQHPVSISYTAVELAEQVLGGLKGRTAMVLGAGKMSVLTLKHLVAEGVDKIIIANRSVEKAEELAKSCGGEAISFADVNHRLEEADILISCTAATHYVIRKSMVEQVMDRRGGKPVFFFDIAVPRDIDPEVAQVPGTHLYDIDAMQHVIDRNLAERRKCAAEAEIIIEHEINQFMRWLNSLFVIPTIVGLKNKGNQIKEKELDRALCKLKHLSEKEKKLVGSLASSIVNQLLHDPITQLRHYAASPEGHLYSEILQNLFCLDVPGQRQKHVVVHYPAVEQRQNRA</sequence>
<proteinExistence type="inferred from homology"/>
<comment type="function">
    <text evidence="1">Catalyzes the NADPH-dependent reduction of glutamyl-tRNA(Glu) to glutamate 1-semialdehyde (GSA).</text>
</comment>
<comment type="catalytic activity">
    <reaction evidence="1">
        <text>(S)-4-amino-5-oxopentanoate + tRNA(Glu) + NADP(+) = L-glutamyl-tRNA(Glu) + NADPH + H(+)</text>
        <dbReference type="Rhea" id="RHEA:12344"/>
        <dbReference type="Rhea" id="RHEA-COMP:9663"/>
        <dbReference type="Rhea" id="RHEA-COMP:9680"/>
        <dbReference type="ChEBI" id="CHEBI:15378"/>
        <dbReference type="ChEBI" id="CHEBI:57501"/>
        <dbReference type="ChEBI" id="CHEBI:57783"/>
        <dbReference type="ChEBI" id="CHEBI:58349"/>
        <dbReference type="ChEBI" id="CHEBI:78442"/>
        <dbReference type="ChEBI" id="CHEBI:78520"/>
        <dbReference type="EC" id="1.2.1.70"/>
    </reaction>
</comment>
<comment type="pathway">
    <text evidence="1">Porphyrin-containing compound metabolism; protoporphyrin-IX biosynthesis; 5-aminolevulinate from L-glutamyl-tRNA(Glu): step 1/2.</text>
</comment>
<comment type="subunit">
    <text evidence="1">Homodimer.</text>
</comment>
<comment type="domain">
    <text evidence="1">Possesses an unusual extended V-shaped dimeric structure with each monomer consisting of three distinct domains arranged along a curved 'spinal' alpha-helix. The N-terminal catalytic domain specifically recognizes the glutamate moiety of the substrate. The second domain is the NADPH-binding domain, and the third C-terminal domain is responsible for dimerization.</text>
</comment>
<comment type="miscellaneous">
    <text evidence="1">During catalysis, the active site Cys acts as a nucleophile attacking the alpha-carbonyl group of tRNA-bound glutamate with the formation of a thioester intermediate between enzyme and glutamate, and the concomitant release of tRNA(Glu). The thioester intermediate is finally reduced by direct hydride transfer from NADPH, to form the product GSA.</text>
</comment>
<comment type="similarity">
    <text evidence="1">Belongs to the glutamyl-tRNA reductase family.</text>
</comment>
<accession>Q9ZGG6</accession>